<protein>
    <recommendedName>
        <fullName>Thioredoxin</fullName>
        <shortName>Trx</shortName>
    </recommendedName>
</protein>
<feature type="chain" id="PRO_0000120026" description="Thioredoxin">
    <location>
        <begin position="1"/>
        <end position="106"/>
    </location>
</feature>
<feature type="domain" description="Thioredoxin" evidence="2">
    <location>
        <begin position="2"/>
        <end position="106"/>
    </location>
</feature>
<feature type="active site" description="Nucleophile" evidence="1">
    <location>
        <position position="32"/>
    </location>
</feature>
<feature type="active site" description="Nucleophile" evidence="1">
    <location>
        <position position="35"/>
    </location>
</feature>
<feature type="site" description="Deprotonates C-terminal active site Cys" evidence="1">
    <location>
        <position position="26"/>
    </location>
</feature>
<feature type="site" description="Contributes to redox potential value" evidence="1">
    <location>
        <position position="33"/>
    </location>
</feature>
<feature type="site" description="Contributes to redox potential value" evidence="1">
    <location>
        <position position="34"/>
    </location>
</feature>
<feature type="disulfide bond" description="Redox-active" evidence="2">
    <location>
        <begin position="32"/>
        <end position="35"/>
    </location>
</feature>
<name>THIO_GEOCY</name>
<organism>
    <name type="scientific">Geodia cydonium</name>
    <name type="common">Sponge</name>
    <dbReference type="NCBI Taxonomy" id="6047"/>
    <lineage>
        <taxon>Eukaryota</taxon>
        <taxon>Metazoa</taxon>
        <taxon>Porifera</taxon>
        <taxon>Demospongiae</taxon>
        <taxon>Heteroscleromorpha</taxon>
        <taxon>Tetractinellida</taxon>
        <taxon>Astrophorina</taxon>
        <taxon>Geodiidae</taxon>
        <taxon>Geodia</taxon>
    </lineage>
</organism>
<accession>O96952</accession>
<keyword id="KW-0963">Cytoplasm</keyword>
<keyword id="KW-1015">Disulfide bond</keyword>
<keyword id="KW-0249">Electron transport</keyword>
<keyword id="KW-0676">Redox-active center</keyword>
<keyword id="KW-0813">Transport</keyword>
<evidence type="ECO:0000250" key="1"/>
<evidence type="ECO:0000255" key="2">
    <source>
        <dbReference type="PROSITE-ProRule" id="PRU00691"/>
    </source>
</evidence>
<evidence type="ECO:0000305" key="3"/>
<dbReference type="EMBL" id="Y17147">
    <property type="protein sequence ID" value="CAA76654.1"/>
    <property type="molecule type" value="mRNA"/>
</dbReference>
<dbReference type="SMR" id="O96952"/>
<dbReference type="GO" id="GO:0005737">
    <property type="term" value="C:cytoplasm"/>
    <property type="evidence" value="ECO:0007669"/>
    <property type="project" value="UniProtKB-SubCell"/>
</dbReference>
<dbReference type="GO" id="GO:0015035">
    <property type="term" value="F:protein-disulfide reductase activity"/>
    <property type="evidence" value="ECO:0007669"/>
    <property type="project" value="InterPro"/>
</dbReference>
<dbReference type="CDD" id="cd02947">
    <property type="entry name" value="TRX_family"/>
    <property type="match status" value="1"/>
</dbReference>
<dbReference type="FunFam" id="3.40.30.10:FF:000245">
    <property type="entry name" value="Thioredoxin"/>
    <property type="match status" value="1"/>
</dbReference>
<dbReference type="Gene3D" id="3.40.30.10">
    <property type="entry name" value="Glutaredoxin"/>
    <property type="match status" value="1"/>
</dbReference>
<dbReference type="InterPro" id="IPR005746">
    <property type="entry name" value="Thioredoxin"/>
</dbReference>
<dbReference type="InterPro" id="IPR036249">
    <property type="entry name" value="Thioredoxin-like_sf"/>
</dbReference>
<dbReference type="InterPro" id="IPR017937">
    <property type="entry name" value="Thioredoxin_CS"/>
</dbReference>
<dbReference type="InterPro" id="IPR013766">
    <property type="entry name" value="Thioredoxin_domain"/>
</dbReference>
<dbReference type="PANTHER" id="PTHR46115">
    <property type="entry name" value="THIOREDOXIN-LIKE PROTEIN 1"/>
    <property type="match status" value="1"/>
</dbReference>
<dbReference type="Pfam" id="PF00085">
    <property type="entry name" value="Thioredoxin"/>
    <property type="match status" value="1"/>
</dbReference>
<dbReference type="PIRSF" id="PIRSF000077">
    <property type="entry name" value="Thioredoxin"/>
    <property type="match status" value="1"/>
</dbReference>
<dbReference type="PRINTS" id="PR00421">
    <property type="entry name" value="THIOREDOXIN"/>
</dbReference>
<dbReference type="SUPFAM" id="SSF52833">
    <property type="entry name" value="Thioredoxin-like"/>
    <property type="match status" value="1"/>
</dbReference>
<dbReference type="PROSITE" id="PS00194">
    <property type="entry name" value="THIOREDOXIN_1"/>
    <property type="match status" value="1"/>
</dbReference>
<dbReference type="PROSITE" id="PS51352">
    <property type="entry name" value="THIOREDOXIN_2"/>
    <property type="match status" value="1"/>
</dbReference>
<comment type="function">
    <text evidence="1">Participates in various redox reactions through the reversible oxidation of its active center dithiol to a disulfide and catalyzes dithiol-disulfide exchange reactions.</text>
</comment>
<comment type="subcellular location">
    <subcellularLocation>
        <location evidence="1">Cytoplasm</location>
    </subcellularLocation>
</comment>
<comment type="similarity">
    <text evidence="3">Belongs to the thioredoxin family.</text>
</comment>
<proteinExistence type="inferred from homology"/>
<reference key="1">
    <citation type="journal article" date="1998" name="Mar. Ecol. Prog. Ser.">
        <title>Expression of the chaperones 14-3-3 and HSP70 induced by PCB 118 (2,3',4,4'5-pentachlorobiphenyl) in the marine sponge Geodia cydonium.</title>
        <authorList>
            <person name="Wiens M."/>
            <person name="Koziol C."/>
            <person name="Hassanein H.M.A."/>
            <person name="Batel R."/>
            <person name="Mueller W.E.G."/>
        </authorList>
    </citation>
    <scope>NUCLEOTIDE SEQUENCE [MRNA]</scope>
</reference>
<sequence length="106" mass="11992">MVNFLKTKADFDQALKDAGDKLVVIDFTASWCGPCQRIAPKYVEMAKEFPDVIFYKVDVDENDETAEAEKIQAMPTFKFYKSGKALSDYVQGANEAGLREKIKKNK</sequence>
<gene>
    <name type="primary">THIO</name>
</gene>